<dbReference type="EMBL" id="CP000626">
    <property type="protein sequence ID" value="ABQ18766.1"/>
    <property type="molecule type" value="Genomic_DNA"/>
</dbReference>
<dbReference type="EMBL" id="CP001236">
    <property type="protein sequence ID" value="ACP11537.1"/>
    <property type="molecule type" value="Genomic_DNA"/>
</dbReference>
<dbReference type="RefSeq" id="WP_000054763.1">
    <property type="nucleotide sequence ID" value="NZ_JAACZH010000032.1"/>
</dbReference>
<dbReference type="SMR" id="A5F037"/>
<dbReference type="KEGG" id="vco:VC0395_0554"/>
<dbReference type="KEGG" id="vcr:VC395_A0703"/>
<dbReference type="PATRIC" id="fig|345073.21.peg.3436"/>
<dbReference type="eggNOG" id="COG1970">
    <property type="taxonomic scope" value="Bacteria"/>
</dbReference>
<dbReference type="HOGENOM" id="CLU_095787_0_0_6"/>
<dbReference type="OrthoDB" id="9810350at2"/>
<dbReference type="Proteomes" id="UP000000249">
    <property type="component" value="Chromosome 1"/>
</dbReference>
<dbReference type="GO" id="GO:0005886">
    <property type="term" value="C:plasma membrane"/>
    <property type="evidence" value="ECO:0007669"/>
    <property type="project" value="UniProtKB-SubCell"/>
</dbReference>
<dbReference type="GO" id="GO:0008381">
    <property type="term" value="F:mechanosensitive monoatomic ion channel activity"/>
    <property type="evidence" value="ECO:0007669"/>
    <property type="project" value="UniProtKB-UniRule"/>
</dbReference>
<dbReference type="FunFam" id="1.10.1200.120:FF:000001">
    <property type="entry name" value="Large-conductance mechanosensitive channel"/>
    <property type="match status" value="1"/>
</dbReference>
<dbReference type="Gene3D" id="1.10.1200.120">
    <property type="entry name" value="Large-conductance mechanosensitive channel, MscL, domain 1"/>
    <property type="match status" value="1"/>
</dbReference>
<dbReference type="HAMAP" id="MF_00115">
    <property type="entry name" value="MscL"/>
    <property type="match status" value="1"/>
</dbReference>
<dbReference type="InterPro" id="IPR019823">
    <property type="entry name" value="Mechanosensitive_channel_CS"/>
</dbReference>
<dbReference type="InterPro" id="IPR001185">
    <property type="entry name" value="MS_channel"/>
</dbReference>
<dbReference type="InterPro" id="IPR037673">
    <property type="entry name" value="MSC/AndL"/>
</dbReference>
<dbReference type="InterPro" id="IPR036019">
    <property type="entry name" value="MscL_channel"/>
</dbReference>
<dbReference type="NCBIfam" id="TIGR00220">
    <property type="entry name" value="mscL"/>
    <property type="match status" value="1"/>
</dbReference>
<dbReference type="NCBIfam" id="NF001843">
    <property type="entry name" value="PRK00567.1-4"/>
    <property type="match status" value="1"/>
</dbReference>
<dbReference type="PANTHER" id="PTHR30266:SF2">
    <property type="entry name" value="LARGE-CONDUCTANCE MECHANOSENSITIVE CHANNEL"/>
    <property type="match status" value="1"/>
</dbReference>
<dbReference type="PANTHER" id="PTHR30266">
    <property type="entry name" value="MECHANOSENSITIVE CHANNEL MSCL"/>
    <property type="match status" value="1"/>
</dbReference>
<dbReference type="Pfam" id="PF01741">
    <property type="entry name" value="MscL"/>
    <property type="match status" value="1"/>
</dbReference>
<dbReference type="PRINTS" id="PR01264">
    <property type="entry name" value="MECHCHANNEL"/>
</dbReference>
<dbReference type="SUPFAM" id="SSF81330">
    <property type="entry name" value="Gated mechanosensitive channel"/>
    <property type="match status" value="1"/>
</dbReference>
<dbReference type="PROSITE" id="PS01327">
    <property type="entry name" value="MSCL"/>
    <property type="match status" value="1"/>
</dbReference>
<evidence type="ECO:0000255" key="1">
    <source>
        <dbReference type="HAMAP-Rule" id="MF_00115"/>
    </source>
</evidence>
<gene>
    <name evidence="1" type="primary">mscL</name>
    <name type="ordered locus">VC0395_0554</name>
    <name type="ordered locus">VC395_A0703</name>
</gene>
<name>MSCL_VIBC3</name>
<reference key="1">
    <citation type="submission" date="2007-03" db="EMBL/GenBank/DDBJ databases">
        <authorList>
            <person name="Heidelberg J."/>
        </authorList>
    </citation>
    <scope>NUCLEOTIDE SEQUENCE [LARGE SCALE GENOMIC DNA]</scope>
    <source>
        <strain>ATCC 39541 / Classical Ogawa 395 / O395</strain>
    </source>
</reference>
<reference key="2">
    <citation type="journal article" date="2008" name="PLoS ONE">
        <title>A recalibrated molecular clock and independent origins for the cholera pandemic clones.</title>
        <authorList>
            <person name="Feng L."/>
            <person name="Reeves P.R."/>
            <person name="Lan R."/>
            <person name="Ren Y."/>
            <person name="Gao C."/>
            <person name="Zhou Z."/>
            <person name="Ren Y."/>
            <person name="Cheng J."/>
            <person name="Wang W."/>
            <person name="Wang J."/>
            <person name="Qian W."/>
            <person name="Li D."/>
            <person name="Wang L."/>
        </authorList>
    </citation>
    <scope>NUCLEOTIDE SEQUENCE [LARGE SCALE GENOMIC DNA]</scope>
    <source>
        <strain>ATCC 39541 / Classical Ogawa 395 / O395</strain>
    </source>
</reference>
<sequence>MSLLKEFKAFASRGNVIDMAVGIIIGAAFGKIVSSFVADIIMPPIGIILGGVNFSDLSFVLLAAQGDAPAVVIAYGKFIQTVVDFTIIAFAIFMGLKAINSLKRKEEEAPKAPPAPTKDQELLSEIRDLLKAQQDK</sequence>
<protein>
    <recommendedName>
        <fullName evidence="1">Large-conductance mechanosensitive channel</fullName>
    </recommendedName>
</protein>
<accession>A5F037</accession>
<accession>C3M5X4</accession>
<proteinExistence type="inferred from homology"/>
<feature type="chain" id="PRO_1000071351" description="Large-conductance mechanosensitive channel">
    <location>
        <begin position="1"/>
        <end position="136"/>
    </location>
</feature>
<feature type="transmembrane region" description="Helical" evidence="1">
    <location>
        <begin position="9"/>
        <end position="29"/>
    </location>
</feature>
<feature type="transmembrane region" description="Helical" evidence="1">
    <location>
        <begin position="32"/>
        <end position="52"/>
    </location>
</feature>
<feature type="transmembrane region" description="Helical" evidence="1">
    <location>
        <begin position="54"/>
        <end position="74"/>
    </location>
</feature>
<feature type="transmembrane region" description="Helical" evidence="1">
    <location>
        <begin position="79"/>
        <end position="99"/>
    </location>
</feature>
<comment type="function">
    <text evidence="1">Channel that opens in response to stretch forces in the membrane lipid bilayer. May participate in the regulation of osmotic pressure changes within the cell.</text>
</comment>
<comment type="subunit">
    <text evidence="1">Homopentamer.</text>
</comment>
<comment type="subcellular location">
    <subcellularLocation>
        <location evidence="1">Cell inner membrane</location>
        <topology evidence="1">Multi-pass membrane protein</topology>
    </subcellularLocation>
</comment>
<comment type="similarity">
    <text evidence="1">Belongs to the MscL family.</text>
</comment>
<keyword id="KW-0997">Cell inner membrane</keyword>
<keyword id="KW-1003">Cell membrane</keyword>
<keyword id="KW-0407">Ion channel</keyword>
<keyword id="KW-0406">Ion transport</keyword>
<keyword id="KW-0472">Membrane</keyword>
<keyword id="KW-0812">Transmembrane</keyword>
<keyword id="KW-1133">Transmembrane helix</keyword>
<keyword id="KW-0813">Transport</keyword>
<organism>
    <name type="scientific">Vibrio cholerae serotype O1 (strain ATCC 39541 / Classical Ogawa 395 / O395)</name>
    <dbReference type="NCBI Taxonomy" id="345073"/>
    <lineage>
        <taxon>Bacteria</taxon>
        <taxon>Pseudomonadati</taxon>
        <taxon>Pseudomonadota</taxon>
        <taxon>Gammaproteobacteria</taxon>
        <taxon>Vibrionales</taxon>
        <taxon>Vibrionaceae</taxon>
        <taxon>Vibrio</taxon>
    </lineage>
</organism>